<keyword id="KW-0067">ATP-binding</keyword>
<keyword id="KW-1003">Cell membrane</keyword>
<keyword id="KW-0406">Ion transport</keyword>
<keyword id="KW-0472">Membrane</keyword>
<keyword id="KW-0533">Nickel</keyword>
<keyword id="KW-0921">Nickel transport</keyword>
<keyword id="KW-0547">Nucleotide-binding</keyword>
<keyword id="KW-1185">Reference proteome</keyword>
<keyword id="KW-1278">Translocase</keyword>
<keyword id="KW-0813">Transport</keyword>
<accession>Q2FYQ7</accession>
<accession>Q84AN5</accession>
<accession>Q9ZGN4</accession>
<evidence type="ECO:0000255" key="1">
    <source>
        <dbReference type="PROSITE-ProRule" id="PRU00434"/>
    </source>
</evidence>
<evidence type="ECO:0000269" key="2">
    <source>
    </source>
</evidence>
<evidence type="ECO:0000303" key="3">
    <source>
    </source>
</evidence>
<evidence type="ECO:0000305" key="4"/>
<evidence type="ECO:0000305" key="5">
    <source>
    </source>
</evidence>
<organism>
    <name type="scientific">Staphylococcus aureus (strain NCTC 8325 / PS 47)</name>
    <dbReference type="NCBI Taxonomy" id="93061"/>
    <lineage>
        <taxon>Bacteria</taxon>
        <taxon>Bacillati</taxon>
        <taxon>Bacillota</taxon>
        <taxon>Bacilli</taxon>
        <taxon>Bacillales</taxon>
        <taxon>Staphylococcaceae</taxon>
        <taxon>Staphylococcus</taxon>
    </lineage>
</organism>
<gene>
    <name evidence="3" type="primary">nikD</name>
    <name type="synonym">opp-2D</name>
    <name type="synonym">oppD2</name>
    <name type="ordered locus">SAOUHSC_01378</name>
</gene>
<protein>
    <recommendedName>
        <fullName evidence="4">Nickel import system ATP-binding protein NikD</fullName>
        <ecNumber evidence="5">7.2.2.11</ecNumber>
    </recommendedName>
</protein>
<dbReference type="EC" id="7.2.2.11" evidence="5"/>
<dbReference type="EMBL" id="AF076684">
    <property type="protein sequence ID" value="AAC69845.1"/>
    <property type="status" value="ALT_INIT"/>
    <property type="molecule type" value="Genomic_DNA"/>
</dbReference>
<dbReference type="EMBL" id="AY205146">
    <property type="protein sequence ID" value="AAO47757.1"/>
    <property type="molecule type" value="Genomic_DNA"/>
</dbReference>
<dbReference type="EMBL" id="CP000253">
    <property type="protein sequence ID" value="ABD30473.1"/>
    <property type="molecule type" value="Genomic_DNA"/>
</dbReference>
<dbReference type="RefSeq" id="WP_000052317.1">
    <property type="nucleotide sequence ID" value="NZ_LS483365.1"/>
</dbReference>
<dbReference type="RefSeq" id="YP_499905.1">
    <property type="nucleotide sequence ID" value="NC_007795.1"/>
</dbReference>
<dbReference type="SMR" id="Q2FYQ7"/>
<dbReference type="STRING" id="93061.SAOUHSC_01378"/>
<dbReference type="PaxDb" id="1280-SAXN108_1395"/>
<dbReference type="GeneID" id="3920787"/>
<dbReference type="KEGG" id="sao:SAOUHSC_01378"/>
<dbReference type="PATRIC" id="fig|93061.5.peg.1262"/>
<dbReference type="eggNOG" id="COG0444">
    <property type="taxonomic scope" value="Bacteria"/>
</dbReference>
<dbReference type="HOGENOM" id="CLU_000604_1_23_9"/>
<dbReference type="OrthoDB" id="9802264at2"/>
<dbReference type="PRO" id="PR:Q2FYQ7"/>
<dbReference type="Proteomes" id="UP000008816">
    <property type="component" value="Chromosome"/>
</dbReference>
<dbReference type="GO" id="GO:0005886">
    <property type="term" value="C:plasma membrane"/>
    <property type="evidence" value="ECO:0000318"/>
    <property type="project" value="GO_Central"/>
</dbReference>
<dbReference type="GO" id="GO:0015413">
    <property type="term" value="F:ABC-type nickel transporter activity"/>
    <property type="evidence" value="ECO:0007669"/>
    <property type="project" value="UniProtKB-EC"/>
</dbReference>
<dbReference type="GO" id="GO:0005524">
    <property type="term" value="F:ATP binding"/>
    <property type="evidence" value="ECO:0007669"/>
    <property type="project" value="UniProtKB-KW"/>
</dbReference>
<dbReference type="GO" id="GO:0016887">
    <property type="term" value="F:ATP hydrolysis activity"/>
    <property type="evidence" value="ECO:0007669"/>
    <property type="project" value="InterPro"/>
</dbReference>
<dbReference type="GO" id="GO:0022857">
    <property type="term" value="F:transmembrane transporter activity"/>
    <property type="evidence" value="ECO:0000318"/>
    <property type="project" value="GO_Central"/>
</dbReference>
<dbReference type="GO" id="GO:0055085">
    <property type="term" value="P:transmembrane transport"/>
    <property type="evidence" value="ECO:0000318"/>
    <property type="project" value="GO_Central"/>
</dbReference>
<dbReference type="FunFam" id="3.40.50.300:FF:001826">
    <property type="entry name" value="Nickel import system ATP-binding protein NikD"/>
    <property type="match status" value="1"/>
</dbReference>
<dbReference type="Gene3D" id="3.40.50.300">
    <property type="entry name" value="P-loop containing nucleotide triphosphate hydrolases"/>
    <property type="match status" value="1"/>
</dbReference>
<dbReference type="InterPro" id="IPR003593">
    <property type="entry name" value="AAA+_ATPase"/>
</dbReference>
<dbReference type="InterPro" id="IPR050388">
    <property type="entry name" value="ABC_Ni/Peptide_Import"/>
</dbReference>
<dbReference type="InterPro" id="IPR003439">
    <property type="entry name" value="ABC_transporter-like_ATP-bd"/>
</dbReference>
<dbReference type="InterPro" id="IPR027417">
    <property type="entry name" value="P-loop_NTPase"/>
</dbReference>
<dbReference type="PANTHER" id="PTHR43297:SF13">
    <property type="entry name" value="NICKEL ABC TRANSPORTER, ATP-BINDING PROTEIN"/>
    <property type="match status" value="1"/>
</dbReference>
<dbReference type="PANTHER" id="PTHR43297">
    <property type="entry name" value="OLIGOPEPTIDE TRANSPORT ATP-BINDING PROTEIN APPD"/>
    <property type="match status" value="1"/>
</dbReference>
<dbReference type="Pfam" id="PF00005">
    <property type="entry name" value="ABC_tran"/>
    <property type="match status" value="1"/>
</dbReference>
<dbReference type="SMART" id="SM00382">
    <property type="entry name" value="AAA"/>
    <property type="match status" value="1"/>
</dbReference>
<dbReference type="SUPFAM" id="SSF52540">
    <property type="entry name" value="P-loop containing nucleoside triphosphate hydrolases"/>
    <property type="match status" value="1"/>
</dbReference>
<dbReference type="PROSITE" id="PS50893">
    <property type="entry name" value="ABC_TRANSPORTER_2"/>
    <property type="match status" value="1"/>
</dbReference>
<proteinExistence type="evidence at protein level"/>
<name>NIKD_STAA8</name>
<sequence>MSLIDIQNLTIKNTSEKSLIKGIDLKIFSQQINALIGESGAGKSLIAKALLEYLPFDLSCTYDSYQFDGENVSRLSQYYGHTIGYISQNYAESFNDHTKLGKQLTAIYRKHYKGSKEEALSKVDKALSWVNLQSKDILNKYSFQLSGGQLERVYIASVLMLEPKLIIADEPVASLDALNGNQVMDLLQHIVLEHGQTLFIITHNLSHVLKYCQYIYVLKEGQIIERGNINHFKYEHLHPYTERLIKYRTQLKRDYYD</sequence>
<comment type="function">
    <text evidence="2">Part of the ABC transporter complex NikABCDE (Opp2) involved in nickel import. Probably responsible for energy coupling to the transport system. Required for full urease activity and plays a significant role in the virulence of S.aureus during urinary tract infection (UTI).</text>
</comment>
<comment type="catalytic activity">
    <reaction evidence="5">
        <text>Ni(2+)(out) + ATP + H2O = Ni(2+)(in) + ADP + phosphate + H(+)</text>
        <dbReference type="Rhea" id="RHEA:15557"/>
        <dbReference type="ChEBI" id="CHEBI:15377"/>
        <dbReference type="ChEBI" id="CHEBI:15378"/>
        <dbReference type="ChEBI" id="CHEBI:30616"/>
        <dbReference type="ChEBI" id="CHEBI:43474"/>
        <dbReference type="ChEBI" id="CHEBI:49786"/>
        <dbReference type="ChEBI" id="CHEBI:456216"/>
        <dbReference type="EC" id="7.2.2.11"/>
    </reaction>
    <physiologicalReaction direction="left-to-right" evidence="5">
        <dbReference type="Rhea" id="RHEA:15558"/>
    </physiologicalReaction>
</comment>
<comment type="subunit">
    <text evidence="2">The complex is composed of two ATP-binding proteins (NikD and NikE), two transmembrane proteins (NikB and NikC) and a solute-binding protein (NikA).</text>
</comment>
<comment type="subcellular location">
    <subcellularLocation>
        <location evidence="4">Cell membrane</location>
        <topology evidence="4">Peripheral membrane protein</topology>
    </subcellularLocation>
</comment>
<comment type="induction">
    <text evidence="2">Transcription is stable during the exponential phase and increases only in standard conditions in late exponential phase.</text>
</comment>
<comment type="disruption phenotype">
    <text evidence="2">Deletion of the nikBCDE operon strongly reduces nickel transport and urease activity. Mutant shows decreased virulence in a mouse model of ascending UTI.</text>
</comment>
<comment type="similarity">
    <text evidence="4">Belongs to the ABC transporter superfamily.</text>
</comment>
<comment type="sequence caution" evidence="4">
    <conflict type="erroneous initiation">
        <sequence resource="EMBL-CDS" id="AAC69845"/>
    </conflict>
</comment>
<feature type="chain" id="PRO_0000272187" description="Nickel import system ATP-binding protein NikD">
    <location>
        <begin position="1"/>
        <end position="257"/>
    </location>
</feature>
<feature type="domain" description="ABC transporter" evidence="1">
    <location>
        <begin position="4"/>
        <end position="245"/>
    </location>
</feature>
<feature type="binding site" evidence="1">
    <location>
        <begin position="37"/>
        <end position="44"/>
    </location>
    <ligand>
        <name>ATP</name>
        <dbReference type="ChEBI" id="CHEBI:30616"/>
    </ligand>
</feature>
<reference key="1">
    <citation type="journal article" date="1998" name="Mol. Microbiol.">
        <title>Staphylococcus aureus genetic loci impacting growth and survival in multiple infection environments.</title>
        <authorList>
            <person name="Coulter S.N."/>
            <person name="Schwan W.R."/>
            <person name="Ng E.Y.W."/>
            <person name="Langhorne M.H."/>
            <person name="Ritchie H.D."/>
            <person name="Westbrock-Wadman S."/>
            <person name="Hufnagle W.O."/>
            <person name="Folger K.R."/>
            <person name="Bayer A.S."/>
            <person name="Stover C.K."/>
        </authorList>
    </citation>
    <scope>NUCLEOTIDE SEQUENCE [GENOMIC DNA]</scope>
</reference>
<reference key="2">
    <citation type="submission" date="2002-12" db="EMBL/GenBank/DDBJ databases">
        <title>Role of the oligopeptide permease (opp-2) operon in Staphylococcus aureus biofilm formation.</title>
        <authorList>
            <person name="Cramton S.E."/>
            <person name="Madimidou F."/>
            <person name="Goetz F."/>
        </authorList>
    </citation>
    <scope>NUCLEOTIDE SEQUENCE [GENOMIC DNA]</scope>
</reference>
<reference key="3">
    <citation type="book" date="2006" name="Gram positive pathogens, 2nd edition">
        <title>The Staphylococcus aureus NCTC 8325 genome.</title>
        <editorList>
            <person name="Fischetti V."/>
            <person name="Novick R."/>
            <person name="Ferretti J."/>
            <person name="Portnoy D."/>
            <person name="Rood J."/>
        </editorList>
        <authorList>
            <person name="Gillaspy A.F."/>
            <person name="Worrell V."/>
            <person name="Orvis J."/>
            <person name="Roe B.A."/>
            <person name="Dyer D.W."/>
            <person name="Iandolo J.J."/>
        </authorList>
    </citation>
    <scope>NUCLEOTIDE SEQUENCE [LARGE SCALE GENOMIC DNA]</scope>
    <source>
        <strain>NCTC 8325 / PS 47</strain>
    </source>
</reference>
<reference key="4">
    <citation type="journal article" date="2010" name="Mol. Microbiol.">
        <title>A nickel ABC-transporter of Staphylococcus aureus is involved in urinary tract infection.</title>
        <authorList>
            <person name="Hiron A."/>
            <person name="Posteraro B."/>
            <person name="Carriere M."/>
            <person name="Remy L."/>
            <person name="Delporte C."/>
            <person name="La Sorda M."/>
            <person name="Sanguinetti M."/>
            <person name="Juillard V."/>
            <person name="Borezee-Durant E."/>
        </authorList>
    </citation>
    <scope>FUNCTION</scope>
    <scope>CATALYTIC ACTIVITY</scope>
    <scope>SUBUNIT</scope>
    <scope>INDUCTION</scope>
    <scope>DISRUPTION PHENOTYPE</scope>
    <source>
        <strain>RN6390</strain>
    </source>
</reference>